<feature type="chain" id="PRO_0000180994" description="Large ribosomal subunit protein bL21">
    <location>
        <begin position="1"/>
        <end position="112"/>
    </location>
</feature>
<keyword id="KW-1185">Reference proteome</keyword>
<keyword id="KW-0687">Ribonucleoprotein</keyword>
<keyword id="KW-0689">Ribosomal protein</keyword>
<keyword id="KW-0694">RNA-binding</keyword>
<keyword id="KW-0699">rRNA-binding</keyword>
<organism>
    <name type="scientific">Buchnera aphidicola subsp. Baizongia pistaciae (strain Bp)</name>
    <dbReference type="NCBI Taxonomy" id="224915"/>
    <lineage>
        <taxon>Bacteria</taxon>
        <taxon>Pseudomonadati</taxon>
        <taxon>Pseudomonadota</taxon>
        <taxon>Gammaproteobacteria</taxon>
        <taxon>Enterobacterales</taxon>
        <taxon>Erwiniaceae</taxon>
        <taxon>Buchnera</taxon>
    </lineage>
</organism>
<gene>
    <name evidence="1" type="primary">rplU</name>
    <name type="ordered locus">bbp_350</name>
</gene>
<evidence type="ECO:0000255" key="1">
    <source>
        <dbReference type="HAMAP-Rule" id="MF_01363"/>
    </source>
</evidence>
<evidence type="ECO:0000305" key="2"/>
<reference key="1">
    <citation type="journal article" date="2003" name="Proc. Natl. Acad. Sci. U.S.A.">
        <title>Reductive genome evolution in Buchnera aphidicola.</title>
        <authorList>
            <person name="van Ham R.C.H.J."/>
            <person name="Kamerbeek J."/>
            <person name="Palacios C."/>
            <person name="Rausell C."/>
            <person name="Abascal F."/>
            <person name="Bastolla U."/>
            <person name="Fernandez J.M."/>
            <person name="Jimenez L."/>
            <person name="Postigo M."/>
            <person name="Silva F.J."/>
            <person name="Tamames J."/>
            <person name="Viguera E."/>
            <person name="Latorre A."/>
            <person name="Valencia A."/>
            <person name="Moran F."/>
            <person name="Moya A."/>
        </authorList>
    </citation>
    <scope>NUCLEOTIDE SEQUENCE [LARGE SCALE GENOMIC DNA]</scope>
    <source>
        <strain>Bp</strain>
    </source>
</reference>
<comment type="function">
    <text evidence="1">This protein binds to 23S rRNA in the presence of protein L20.</text>
</comment>
<comment type="subunit">
    <text evidence="1">Part of the 50S ribosomal subunit. Contacts protein L20.</text>
</comment>
<comment type="similarity">
    <text evidence="1">Belongs to the bacterial ribosomal protein bL21 family.</text>
</comment>
<accession>Q89AE8</accession>
<dbReference type="EMBL" id="AE016826">
    <property type="protein sequence ID" value="AAO27069.1"/>
    <property type="molecule type" value="Genomic_DNA"/>
</dbReference>
<dbReference type="RefSeq" id="WP_011091470.1">
    <property type="nucleotide sequence ID" value="NC_004545.1"/>
</dbReference>
<dbReference type="SMR" id="Q89AE8"/>
<dbReference type="STRING" id="224915.bbp_350"/>
<dbReference type="KEGG" id="bab:bbp_350"/>
<dbReference type="eggNOG" id="COG0261">
    <property type="taxonomic scope" value="Bacteria"/>
</dbReference>
<dbReference type="HOGENOM" id="CLU_061463_3_3_6"/>
<dbReference type="OrthoDB" id="9813334at2"/>
<dbReference type="Proteomes" id="UP000000601">
    <property type="component" value="Chromosome"/>
</dbReference>
<dbReference type="GO" id="GO:0005737">
    <property type="term" value="C:cytoplasm"/>
    <property type="evidence" value="ECO:0007669"/>
    <property type="project" value="UniProtKB-ARBA"/>
</dbReference>
<dbReference type="GO" id="GO:1990904">
    <property type="term" value="C:ribonucleoprotein complex"/>
    <property type="evidence" value="ECO:0007669"/>
    <property type="project" value="UniProtKB-KW"/>
</dbReference>
<dbReference type="GO" id="GO:0005840">
    <property type="term" value="C:ribosome"/>
    <property type="evidence" value="ECO:0007669"/>
    <property type="project" value="UniProtKB-KW"/>
</dbReference>
<dbReference type="GO" id="GO:0019843">
    <property type="term" value="F:rRNA binding"/>
    <property type="evidence" value="ECO:0007669"/>
    <property type="project" value="UniProtKB-UniRule"/>
</dbReference>
<dbReference type="GO" id="GO:0003735">
    <property type="term" value="F:structural constituent of ribosome"/>
    <property type="evidence" value="ECO:0007669"/>
    <property type="project" value="InterPro"/>
</dbReference>
<dbReference type="GO" id="GO:0006412">
    <property type="term" value="P:translation"/>
    <property type="evidence" value="ECO:0007669"/>
    <property type="project" value="UniProtKB-UniRule"/>
</dbReference>
<dbReference type="HAMAP" id="MF_01363">
    <property type="entry name" value="Ribosomal_bL21"/>
    <property type="match status" value="1"/>
</dbReference>
<dbReference type="InterPro" id="IPR028909">
    <property type="entry name" value="bL21-like"/>
</dbReference>
<dbReference type="InterPro" id="IPR036164">
    <property type="entry name" value="bL21-like_sf"/>
</dbReference>
<dbReference type="InterPro" id="IPR001787">
    <property type="entry name" value="Ribosomal_bL21"/>
</dbReference>
<dbReference type="InterPro" id="IPR018258">
    <property type="entry name" value="Ribosomal_bL21_CS"/>
</dbReference>
<dbReference type="NCBIfam" id="TIGR00061">
    <property type="entry name" value="L21"/>
    <property type="match status" value="1"/>
</dbReference>
<dbReference type="PANTHER" id="PTHR21349">
    <property type="entry name" value="50S RIBOSOMAL PROTEIN L21"/>
    <property type="match status" value="1"/>
</dbReference>
<dbReference type="PANTHER" id="PTHR21349:SF0">
    <property type="entry name" value="LARGE RIBOSOMAL SUBUNIT PROTEIN BL21M"/>
    <property type="match status" value="1"/>
</dbReference>
<dbReference type="Pfam" id="PF00829">
    <property type="entry name" value="Ribosomal_L21p"/>
    <property type="match status" value="1"/>
</dbReference>
<dbReference type="SUPFAM" id="SSF141091">
    <property type="entry name" value="L21p-like"/>
    <property type="match status" value="1"/>
</dbReference>
<dbReference type="PROSITE" id="PS01169">
    <property type="entry name" value="RIBOSOMAL_L21"/>
    <property type="match status" value="1"/>
</dbReference>
<protein>
    <recommendedName>
        <fullName evidence="1">Large ribosomal subunit protein bL21</fullName>
    </recommendedName>
    <alternativeName>
        <fullName evidence="2">50S ribosomal protein L21</fullName>
    </alternativeName>
</protein>
<name>RL21_BUCBP</name>
<sequence length="112" mass="13124">MYAIFKSGGKQHKVIKGQTIRLEKINQSIGTQIKFKKILMCCNGTHITIGKPHIHNNFILANIINHGRHKKIKIIKFNRRKHYKKQQGHRQNFTDVLITNIHNNYREQNNGS</sequence>
<proteinExistence type="inferred from homology"/>